<dbReference type="EC" id="3.4.24.-"/>
<dbReference type="EMBL" id="AB074143">
    <property type="protein sequence ID" value="BAB92013.1"/>
    <property type="molecule type" value="mRNA"/>
</dbReference>
<dbReference type="PIR" id="JX0266">
    <property type="entry name" value="JX0266"/>
</dbReference>
<dbReference type="SMR" id="Q8JIR2"/>
<dbReference type="MEROPS" id="M12.320"/>
<dbReference type="iPTMnet" id="Q8JIR2"/>
<dbReference type="GO" id="GO:0005576">
    <property type="term" value="C:extracellular region"/>
    <property type="evidence" value="ECO:0007669"/>
    <property type="project" value="UniProtKB-SubCell"/>
</dbReference>
<dbReference type="GO" id="GO:0005886">
    <property type="term" value="C:plasma membrane"/>
    <property type="evidence" value="ECO:0007669"/>
    <property type="project" value="TreeGrafter"/>
</dbReference>
<dbReference type="GO" id="GO:0004222">
    <property type="term" value="F:metalloendopeptidase activity"/>
    <property type="evidence" value="ECO:0007669"/>
    <property type="project" value="InterPro"/>
</dbReference>
<dbReference type="GO" id="GO:0008237">
    <property type="term" value="F:metallopeptidase activity"/>
    <property type="evidence" value="ECO:0000314"/>
    <property type="project" value="UniProtKB"/>
</dbReference>
<dbReference type="GO" id="GO:0090729">
    <property type="term" value="F:toxin activity"/>
    <property type="evidence" value="ECO:0007669"/>
    <property type="project" value="UniProtKB-KW"/>
</dbReference>
<dbReference type="GO" id="GO:0008270">
    <property type="term" value="F:zinc ion binding"/>
    <property type="evidence" value="ECO:0000304"/>
    <property type="project" value="UniProtKB"/>
</dbReference>
<dbReference type="GO" id="GO:0006508">
    <property type="term" value="P:proteolysis"/>
    <property type="evidence" value="ECO:0000314"/>
    <property type="project" value="UniProtKB"/>
</dbReference>
<dbReference type="CDD" id="cd04269">
    <property type="entry name" value="ZnMc_adamalysin_II_like"/>
    <property type="match status" value="1"/>
</dbReference>
<dbReference type="FunFam" id="3.40.390.10:FF:000002">
    <property type="entry name" value="Disintegrin and metalloproteinase domain-containing protein 22"/>
    <property type="match status" value="1"/>
</dbReference>
<dbReference type="FunFam" id="4.10.70.10:FF:000001">
    <property type="entry name" value="Disintegrin and metalloproteinase domain-containing protein 22"/>
    <property type="match status" value="1"/>
</dbReference>
<dbReference type="Gene3D" id="3.40.390.10">
    <property type="entry name" value="Collagenase (Catalytic Domain)"/>
    <property type="match status" value="1"/>
</dbReference>
<dbReference type="Gene3D" id="4.10.70.10">
    <property type="entry name" value="Disintegrin domain"/>
    <property type="match status" value="1"/>
</dbReference>
<dbReference type="InterPro" id="IPR006586">
    <property type="entry name" value="ADAM_Cys-rich"/>
</dbReference>
<dbReference type="InterPro" id="IPR018358">
    <property type="entry name" value="Disintegrin_CS"/>
</dbReference>
<dbReference type="InterPro" id="IPR001762">
    <property type="entry name" value="Disintegrin_dom"/>
</dbReference>
<dbReference type="InterPro" id="IPR036436">
    <property type="entry name" value="Disintegrin_dom_sf"/>
</dbReference>
<dbReference type="InterPro" id="IPR024079">
    <property type="entry name" value="MetalloPept_cat_dom_sf"/>
</dbReference>
<dbReference type="InterPro" id="IPR001590">
    <property type="entry name" value="Peptidase_M12B"/>
</dbReference>
<dbReference type="InterPro" id="IPR002870">
    <property type="entry name" value="Peptidase_M12B_N"/>
</dbReference>
<dbReference type="InterPro" id="IPR034027">
    <property type="entry name" value="Reprolysin_adamalysin"/>
</dbReference>
<dbReference type="PANTHER" id="PTHR11905">
    <property type="entry name" value="ADAM A DISINTEGRIN AND METALLOPROTEASE DOMAIN"/>
    <property type="match status" value="1"/>
</dbReference>
<dbReference type="PANTHER" id="PTHR11905:SF32">
    <property type="entry name" value="DISINTEGRIN AND METALLOPROTEINASE DOMAIN-CONTAINING PROTEIN 28"/>
    <property type="match status" value="1"/>
</dbReference>
<dbReference type="Pfam" id="PF08516">
    <property type="entry name" value="ADAM_CR"/>
    <property type="match status" value="1"/>
</dbReference>
<dbReference type="Pfam" id="PF00200">
    <property type="entry name" value="Disintegrin"/>
    <property type="match status" value="1"/>
</dbReference>
<dbReference type="Pfam" id="PF01562">
    <property type="entry name" value="Pep_M12B_propep"/>
    <property type="match status" value="1"/>
</dbReference>
<dbReference type="Pfam" id="PF01421">
    <property type="entry name" value="Reprolysin"/>
    <property type="match status" value="1"/>
</dbReference>
<dbReference type="PRINTS" id="PR00289">
    <property type="entry name" value="DISINTEGRIN"/>
</dbReference>
<dbReference type="SMART" id="SM00608">
    <property type="entry name" value="ACR"/>
    <property type="match status" value="1"/>
</dbReference>
<dbReference type="SMART" id="SM00050">
    <property type="entry name" value="DISIN"/>
    <property type="match status" value="1"/>
</dbReference>
<dbReference type="SUPFAM" id="SSF57552">
    <property type="entry name" value="Blood coagulation inhibitor (disintegrin)"/>
    <property type="match status" value="1"/>
</dbReference>
<dbReference type="SUPFAM" id="SSF55486">
    <property type="entry name" value="Metalloproteases ('zincins'), catalytic domain"/>
    <property type="match status" value="1"/>
</dbReference>
<dbReference type="PROSITE" id="PS50215">
    <property type="entry name" value="ADAM_MEPRO"/>
    <property type="match status" value="1"/>
</dbReference>
<dbReference type="PROSITE" id="PS00427">
    <property type="entry name" value="DISINTEGRIN_1"/>
    <property type="match status" value="1"/>
</dbReference>
<dbReference type="PROSITE" id="PS50214">
    <property type="entry name" value="DISINTEGRIN_2"/>
    <property type="match status" value="1"/>
</dbReference>
<dbReference type="PROSITE" id="PS00142">
    <property type="entry name" value="ZINC_PROTEASE"/>
    <property type="match status" value="1"/>
</dbReference>
<keyword id="KW-0106">Calcium</keyword>
<keyword id="KW-1217">Cell adhesion impairing toxin</keyword>
<keyword id="KW-0903">Direct protein sequencing</keyword>
<keyword id="KW-1015">Disulfide bond</keyword>
<keyword id="KW-0325">Glycoprotein</keyword>
<keyword id="KW-1200">Hemorrhagic toxin</keyword>
<keyword id="KW-1199">Hemostasis impairing toxin</keyword>
<keyword id="KW-0378">Hydrolase</keyword>
<keyword id="KW-0479">Metal-binding</keyword>
<keyword id="KW-0482">Metalloprotease</keyword>
<keyword id="KW-1201">Platelet aggregation inhibiting toxin</keyword>
<keyword id="KW-0645">Protease</keyword>
<keyword id="KW-0964">Secreted</keyword>
<keyword id="KW-0732">Signal</keyword>
<keyword id="KW-0800">Toxin</keyword>
<keyword id="KW-0862">Zinc</keyword>
<keyword id="KW-0865">Zymogen</keyword>
<evidence type="ECO:0000250" key="1"/>
<evidence type="ECO:0000255" key="2"/>
<evidence type="ECO:0000255" key="3">
    <source>
        <dbReference type="PROSITE-ProRule" id="PRU00068"/>
    </source>
</evidence>
<evidence type="ECO:0000255" key="4">
    <source>
        <dbReference type="PROSITE-ProRule" id="PRU00276"/>
    </source>
</evidence>
<evidence type="ECO:0000255" key="5">
    <source>
        <dbReference type="PROSITE-ProRule" id="PRU10095"/>
    </source>
</evidence>
<evidence type="ECO:0000269" key="6">
    <source>
    </source>
</evidence>
<evidence type="ECO:0000269" key="7">
    <source>
    </source>
</evidence>
<evidence type="ECO:0000269" key="8">
    <source>
    </source>
</evidence>
<evidence type="ECO:0000305" key="9"/>
<evidence type="ECO:0000312" key="10">
    <source>
        <dbReference type="EMBL" id="BAB92013.1"/>
    </source>
</evidence>
<protein>
    <recommendedName>
        <fullName>Zinc metalloproteinase/disintegrin-like HR1a</fullName>
        <ecNumber>3.4.24.-</ecNumber>
    </recommendedName>
    <alternativeName>
        <fullName>Snake venom metalloproteinase</fullName>
        <shortName>SVMP</shortName>
    </alternativeName>
    <component>
        <recommendedName>
            <fullName>Disintegrin-like 1a</fullName>
        </recommendedName>
    </component>
</protein>
<accession>Q8JIR2</accession>
<accession>Q9PSN8</accession>
<organism>
    <name type="scientific">Protobothrops flavoviridis</name>
    <name type="common">Habu</name>
    <name type="synonym">Trimeresurus flavoviridis</name>
    <dbReference type="NCBI Taxonomy" id="88087"/>
    <lineage>
        <taxon>Eukaryota</taxon>
        <taxon>Metazoa</taxon>
        <taxon>Chordata</taxon>
        <taxon>Craniata</taxon>
        <taxon>Vertebrata</taxon>
        <taxon>Euteleostomi</taxon>
        <taxon>Lepidosauria</taxon>
        <taxon>Squamata</taxon>
        <taxon>Bifurcata</taxon>
        <taxon>Unidentata</taxon>
        <taxon>Episquamata</taxon>
        <taxon>Toxicofera</taxon>
        <taxon>Serpentes</taxon>
        <taxon>Colubroidea</taxon>
        <taxon>Viperidae</taxon>
        <taxon>Crotalinae</taxon>
        <taxon>Protobothrops</taxon>
    </lineage>
</organism>
<comment type="function">
    <molecule>Zinc metalloproteinase/disintegrin-like HR1a</molecule>
    <text evidence="6 7">Zinc protease that induces hemorrhage and has proteolytic activity (PubMed:18061641). Has preference for Ala, His, Pro, Met, and Tyr at the P1 position, in descending order (in vitro). Predominantly prefers Val and Asp at the P3 and P2 positions, respectively (PubMed:18256489).</text>
</comment>
<comment type="function">
    <molecule>Disintegrin-like 1a</molecule>
    <text evidence="1">Inhibits platelet aggregation induced by ADP, thrombin, platelet-activating factor and collagen. Acts by inhibiting fibrinogen interaction with platelet receptors alpha-IIb/beta-3 (ITGA2B/ITGB3) (By similarity).</text>
</comment>
<comment type="cofactor">
    <cofactor evidence="1">
        <name>Zn(2+)</name>
        <dbReference type="ChEBI" id="CHEBI:29105"/>
    </cofactor>
    <text evidence="1">Binds 1 zinc ion per subunit.</text>
</comment>
<comment type="subunit">
    <text evidence="1">Monomer.</text>
</comment>
<comment type="subcellular location">
    <subcellularLocation>
        <location>Secreted</location>
    </subcellularLocation>
</comment>
<comment type="tissue specificity">
    <text>Expressed by the venom gland.</text>
</comment>
<comment type="miscellaneous">
    <text>The disintegrin domain belongs to the long disintegrin subfamily.</text>
</comment>
<comment type="similarity">
    <text evidence="9">Belongs to the venom metalloproteinase (M12B) family. P-III subfamily. P-IIIb sub-subfamily.</text>
</comment>
<feature type="signal peptide" evidence="2">
    <location>
        <begin position="1"/>
        <end position="20"/>
    </location>
</feature>
<feature type="propeptide" id="PRO_0000029017" evidence="1">
    <location>
        <begin position="21"/>
        <end position="190"/>
    </location>
</feature>
<feature type="chain" id="PRO_0000029018" description="Zinc metalloproteinase/disintegrin-like HR1a">
    <location>
        <begin position="191"/>
        <end position="609"/>
    </location>
</feature>
<feature type="propeptide" id="PRO_0000029019" evidence="8">
    <location>
        <begin position="397"/>
        <end position="400"/>
    </location>
</feature>
<feature type="chain" id="PRO_0000029020" description="Disintegrin-like 1a">
    <location>
        <begin position="401"/>
        <end position="609"/>
    </location>
</feature>
<feature type="domain" description="Peptidase M12B" evidence="4">
    <location>
        <begin position="200"/>
        <end position="396"/>
    </location>
</feature>
<feature type="domain" description="Disintegrin" evidence="3">
    <location>
        <begin position="404"/>
        <end position="490"/>
    </location>
</feature>
<feature type="short sequence motif" description="D/ECD-tripeptide">
    <location>
        <begin position="468"/>
        <end position="470"/>
    </location>
</feature>
<feature type="active site" evidence="4 5">
    <location>
        <position position="337"/>
    </location>
</feature>
<feature type="binding site" evidence="1">
    <location>
        <position position="203"/>
    </location>
    <ligand>
        <name>Ca(2+)</name>
        <dbReference type="ChEBI" id="CHEBI:29108"/>
        <label>1</label>
    </ligand>
</feature>
<feature type="binding site" evidence="1">
    <location>
        <position position="287"/>
    </location>
    <ligand>
        <name>Ca(2+)</name>
        <dbReference type="ChEBI" id="CHEBI:29108"/>
        <label>1</label>
    </ligand>
</feature>
<feature type="binding site" evidence="1">
    <location>
        <position position="336"/>
    </location>
    <ligand>
        <name>Zn(2+)</name>
        <dbReference type="ChEBI" id="CHEBI:29105"/>
        <note>catalytic</note>
    </ligand>
</feature>
<feature type="binding site" evidence="1">
    <location>
        <position position="340"/>
    </location>
    <ligand>
        <name>Zn(2+)</name>
        <dbReference type="ChEBI" id="CHEBI:29105"/>
        <note>catalytic</note>
    </ligand>
</feature>
<feature type="binding site" evidence="1">
    <location>
        <position position="346"/>
    </location>
    <ligand>
        <name>Zn(2+)</name>
        <dbReference type="ChEBI" id="CHEBI:29105"/>
        <note>catalytic</note>
    </ligand>
</feature>
<feature type="binding site" evidence="1">
    <location>
        <position position="391"/>
    </location>
    <ligand>
        <name>Ca(2+)</name>
        <dbReference type="ChEBI" id="CHEBI:29108"/>
        <label>1</label>
    </ligand>
</feature>
<feature type="binding site" evidence="1">
    <location>
        <position position="394"/>
    </location>
    <ligand>
        <name>Ca(2+)</name>
        <dbReference type="ChEBI" id="CHEBI:29108"/>
        <label>1</label>
    </ligand>
</feature>
<feature type="binding site" evidence="1">
    <location>
        <position position="406"/>
    </location>
    <ligand>
        <name>Ca(2+)</name>
        <dbReference type="ChEBI" id="CHEBI:29108"/>
        <label>2</label>
    </ligand>
</feature>
<feature type="binding site" evidence="1">
    <location>
        <position position="409"/>
    </location>
    <ligand>
        <name>Ca(2+)</name>
        <dbReference type="ChEBI" id="CHEBI:29108"/>
        <label>2</label>
    </ligand>
</feature>
<feature type="binding site" evidence="1">
    <location>
        <position position="411"/>
    </location>
    <ligand>
        <name>Ca(2+)</name>
        <dbReference type="ChEBI" id="CHEBI:29108"/>
        <label>2</label>
    </ligand>
</feature>
<feature type="binding site" evidence="1">
    <location>
        <position position="413"/>
    </location>
    <ligand>
        <name>Ca(2+)</name>
        <dbReference type="ChEBI" id="CHEBI:29108"/>
        <label>2</label>
    </ligand>
</feature>
<feature type="binding site" evidence="1">
    <location>
        <position position="416"/>
    </location>
    <ligand>
        <name>Ca(2+)</name>
        <dbReference type="ChEBI" id="CHEBI:29108"/>
        <label>2</label>
    </ligand>
</feature>
<feature type="binding site" evidence="1">
    <location>
        <position position="419"/>
    </location>
    <ligand>
        <name>Ca(2+)</name>
        <dbReference type="ChEBI" id="CHEBI:29108"/>
        <label>2</label>
    </ligand>
</feature>
<feature type="binding site" evidence="1">
    <location>
        <position position="470"/>
    </location>
    <ligand>
        <name>Ca(2+)</name>
        <dbReference type="ChEBI" id="CHEBI:29108"/>
        <label>3</label>
    </ligand>
</feature>
<feature type="binding site" evidence="1">
    <location>
        <position position="473"/>
    </location>
    <ligand>
        <name>Ca(2+)</name>
        <dbReference type="ChEBI" id="CHEBI:29108"/>
        <label>3</label>
    </ligand>
</feature>
<feature type="binding site" evidence="1">
    <location>
        <position position="485"/>
    </location>
    <ligand>
        <name>Ca(2+)</name>
        <dbReference type="ChEBI" id="CHEBI:29108"/>
        <label>3</label>
    </ligand>
</feature>
<feature type="glycosylation site" description="N-linked (GlcNAc...) asparagine" evidence="2">
    <location>
        <position position="298"/>
    </location>
</feature>
<feature type="glycosylation site" description="N-linked (GlcNAc...) asparagine" evidence="2">
    <location>
        <position position="350"/>
    </location>
</feature>
<feature type="glycosylation site" description="N-linked (GlcNAc...) asparagine" evidence="2">
    <location>
        <position position="374"/>
    </location>
</feature>
<feature type="glycosylation site" description="N-linked (GlcNAc...) asparagine" evidence="8">
    <location>
        <position position="520"/>
    </location>
</feature>
<feature type="disulfide bond" description="In zinc metalloproteinase-disintegrin-like HR1a" evidence="1">
    <location>
        <begin position="311"/>
        <end position="391"/>
    </location>
</feature>
<feature type="disulfide bond" description="In zinc metalloproteinase-disintegrin-like HR1a" evidence="1">
    <location>
        <begin position="351"/>
        <end position="375"/>
    </location>
</feature>
<feature type="disulfide bond" description="In zinc metalloproteinase-disintegrin-like HR1a" evidence="1">
    <location>
        <begin position="353"/>
        <end position="358"/>
    </location>
</feature>
<feature type="disulfide bond" description="In zinc metalloproteinase-disintegrin-like HR1a; alternate" evidence="1">
    <location>
        <begin position="407"/>
        <end position="436"/>
    </location>
</feature>
<feature type="disulfide bond" description="In disintegrin-like 1a; alternate" evidence="1">
    <location>
        <begin position="407"/>
        <end position="426"/>
    </location>
</feature>
<feature type="disulfide bond" description="In disintegrin-like 1a; alternate" evidence="1">
    <location>
        <begin position="418"/>
        <end position="436"/>
    </location>
</feature>
<feature type="disulfide bond" description="In zinc metalloproteinase-disintegrin-like HR1a; alternate" evidence="1">
    <location>
        <begin position="418"/>
        <end position="431"/>
    </location>
</feature>
<feature type="disulfide bond" description="In zinc metalloproteinase-disintegrin-like HR1a; alternate" evidence="1">
    <location>
        <begin position="420"/>
        <end position="426"/>
    </location>
</feature>
<feature type="disulfide bond" description="In zinc metalloproteinase-disintegrin-like HR1a" evidence="1">
    <location>
        <begin position="430"/>
        <end position="453"/>
    </location>
</feature>
<feature type="disulfide bond" description="In zinc metalloproteinase-disintegrin-like HR1a" evidence="1">
    <location>
        <begin position="444"/>
        <end position="450"/>
    </location>
</feature>
<feature type="disulfide bond" description="In zinc metalloproteinase-disintegrin-like HR1a" evidence="1">
    <location>
        <begin position="449"/>
        <end position="475"/>
    </location>
</feature>
<feature type="disulfide bond" description="In both disintegrin-like 1a and zinc metalloproteinase-disintegrin-like HR1a" evidence="3 4">
    <location>
        <begin position="462"/>
        <end position="482"/>
    </location>
</feature>
<feature type="disulfide bond" description="In zinc metalloproteinase-disintegrin-like HR1a; alternate" evidence="1">
    <location>
        <begin position="469"/>
        <end position="501"/>
    </location>
</feature>
<feature type="disulfide bond" description="In disintegrin-like 1a; alternate" evidence="1">
    <location>
        <begin position="469"/>
        <end position="494"/>
    </location>
</feature>
<feature type="disulfide bond" description="In zinc metalloproteinase-disintegrin-like HR1a; alternate" evidence="1">
    <location>
        <begin position="494"/>
        <end position="506"/>
    </location>
</feature>
<feature type="disulfide bond" description="In disintegrin-like 1a" evidence="1">
    <location>
        <begin position="501"/>
        <end position="506"/>
    </location>
</feature>
<feature type="disulfide bond" description="In zinc metalloproteinase-disintegrin-like HR1a; alternate" evidence="1">
    <location>
        <begin position="513"/>
        <end position="563"/>
    </location>
</feature>
<feature type="disulfide bond" description="In disintegrin-like 1a; alternate" evidence="1">
    <location>
        <begin position="513"/>
        <end position="528"/>
    </location>
</feature>
<feature type="disulfide bond" description="In zinc metalloproteinase-disintegrin-like HR1a; alternate" evidence="1">
    <location>
        <begin position="528"/>
        <end position="571"/>
    </location>
</feature>
<feature type="disulfide bond" description="In zinc metalloproteinase-disintegrin-like HR1a; alternate" evidence="1">
    <location>
        <begin position="541"/>
        <end position="551"/>
    </location>
</feature>
<feature type="disulfide bond" description="In disintegrin-like 1a; alternate" evidence="1">
    <location>
        <begin position="551"/>
        <end position="558"/>
    </location>
</feature>
<feature type="disulfide bond" description="In zinc metalloproteinase-disintegrin-like HR1a; alternate" evidence="1">
    <location>
        <begin position="558"/>
        <end position="597"/>
    </location>
</feature>
<feature type="disulfide bond" description="In disintegrin-like 1a" evidence="1">
    <location>
        <begin position="563"/>
        <end position="571"/>
    </location>
</feature>
<feature type="disulfide bond" description="In zinc metalloproteinase-disintegrin-like HR1a; alternate" evidence="1">
    <location>
        <begin position="591"/>
        <end position="602"/>
    </location>
</feature>
<feature type="disulfide bond" description="In disintegrin-like 1a" evidence="1">
    <location>
        <begin position="597"/>
        <end position="602"/>
    </location>
</feature>
<sequence length="609" mass="68765">MIQVLLVTICLAVFPYQGSSIILGSGNVNDYEVVYPRKVTAVPKGAVQPKYEDTMQYEFKVNGEPVVLHLEKNKGLFSKDYSETHYSPDGREITTYPSVEDHCYYHGRIQNDADSTASISACNGLKGHFKLQGEMYLIEPLRFSDSEAHAVFKYENVEKEDEAPKMCGVTQTNWESDEPIKKASKLVVTAEQQRYLNNFRFIELVIVADYRMFTKFNSNLNEVKTWVYEIVNTLNEIYRYLYVRVALVALEVWSNGDLSSVTLSAYDTLDSFGEWRKRDLLKRKSHDNAQLLTAIDFNGTIIGLAHVASMCDPKCSTGIVQDYSSRNLVVAVIMAHEMGHNLGIRHDRENCTCHANSCIMSAVISDQPSKYFSNCSHVQYWNYINDDEPQCILNEPLRTDIVSPPVCGNELLEVGEECDCGSPATCRYPCCDAATCKLHSWVECESGECCEQCRFRTAGTECRARRSECDIAESCTGHSADCPTDRFHRNGQPCLHNFGYCYNGNCPIMYHQCYALWGANATVAKDSCFEDNQKGNDYGYCRKENGRKIPCEPQDVKCGRLYCSLGNQLPCRFFYTPTDENIGMVDTGTKCGDKKVCSNRQCVDVNTAY</sequence>
<name>VM3HA_PROFL</name>
<reference evidence="9 10" key="1">
    <citation type="journal article" date="2002" name="Toxicon">
        <title>Molecular cloning of HR1a and HR1b, high molecular hemorrhagic factors, from Trimeresurus flavoviridis venom.</title>
        <authorList>
            <person name="Kishimoto M."/>
            <person name="Takahashi T."/>
        </authorList>
    </citation>
    <scope>NUCLEOTIDE SEQUENCE [MRNA]</scope>
    <source>
        <tissue>Venom gland</tissue>
    </source>
</reference>
<reference evidence="9" key="2">
    <citation type="journal article" date="1993" name="J. Biochem.">
        <title>Primary structures of platelet aggregation inhibitors (disintegrins) autoproteolytically released from snake venom hemorrhagic metalloproteinases and new fluorogenic peptide substrates for these enzymes.</title>
        <authorList>
            <person name="Takeya H."/>
            <person name="Nishida S."/>
            <person name="Nishino N."/>
            <person name="Makinose Y."/>
            <person name="Omori-Satoh T."/>
            <person name="Nikai T."/>
            <person name="Sugihara H."/>
            <person name="Iwanaga S."/>
        </authorList>
    </citation>
    <scope>PROTEIN SEQUENCE OF 401-609</scope>
    <scope>GLYCOSYLATION AT ASN-520</scope>
    <source>
        <tissue evidence="8">Venom</tissue>
    </source>
</reference>
<reference key="3">
    <citation type="journal article" date="2008" name="Toxicon">
        <title>Neutralization of hemorrhagic snake venom metalloproteinase HR1a from Protobothrops flavoviridis by human monoclonal antibody.</title>
        <authorList>
            <person name="Morine N."/>
            <person name="Matsuda S."/>
            <person name="Terada K."/>
            <person name="Eto A."/>
            <person name="Ishida I."/>
            <person name="Oku H."/>
        </authorList>
    </citation>
    <scope>FUNCTION</scope>
    <scope>3D-STRUCTURE MODELING</scope>
</reference>
<reference key="4">
    <citation type="journal article" date="2008" name="Biosci. Biotechnol. Biochem.">
        <title>The occurrence of HR1b in the venom of the snake Okinawa habu (Protobothrops flavoviridis).</title>
        <authorList>
            <person name="Morine N."/>
            <person name="Matsuda S."/>
            <person name="Terada K."/>
            <person name="Iwasaki H."/>
            <person name="Oku H."/>
        </authorList>
    </citation>
    <scope>CATALYTIC ACTIVITY</scope>
    <source>
        <strain>Okinawa habu</strain>
        <tissue>Venom</tissue>
    </source>
</reference>
<proteinExistence type="evidence at protein level"/>